<gene>
    <name evidence="1" type="primary">surE</name>
    <name type="ordered locus">Msm_1218</name>
</gene>
<keyword id="KW-0963">Cytoplasm</keyword>
<keyword id="KW-0378">Hydrolase</keyword>
<keyword id="KW-0479">Metal-binding</keyword>
<keyword id="KW-0547">Nucleotide-binding</keyword>
<evidence type="ECO:0000255" key="1">
    <source>
        <dbReference type="HAMAP-Rule" id="MF_00060"/>
    </source>
</evidence>
<dbReference type="EC" id="3.1.3.5" evidence="1"/>
<dbReference type="EMBL" id="CP000678">
    <property type="protein sequence ID" value="ABQ87423.1"/>
    <property type="molecule type" value="Genomic_DNA"/>
</dbReference>
<dbReference type="RefSeq" id="WP_011954366.1">
    <property type="nucleotide sequence ID" value="NZ_CP117965.1"/>
</dbReference>
<dbReference type="SMR" id="A5UMJ5"/>
<dbReference type="STRING" id="420247.Msm_1218"/>
<dbReference type="EnsemblBacteria" id="ABQ87423">
    <property type="protein sequence ID" value="ABQ87423"/>
    <property type="gene ID" value="Msm_1218"/>
</dbReference>
<dbReference type="GeneID" id="78817871"/>
<dbReference type="KEGG" id="msi:Msm_1218"/>
<dbReference type="PATRIC" id="fig|420247.28.peg.1217"/>
<dbReference type="eggNOG" id="arCOG02303">
    <property type="taxonomic scope" value="Archaea"/>
</dbReference>
<dbReference type="HOGENOM" id="CLU_045192_1_3_2"/>
<dbReference type="Proteomes" id="UP000001992">
    <property type="component" value="Chromosome"/>
</dbReference>
<dbReference type="GO" id="GO:0005737">
    <property type="term" value="C:cytoplasm"/>
    <property type="evidence" value="ECO:0007669"/>
    <property type="project" value="UniProtKB-SubCell"/>
</dbReference>
<dbReference type="GO" id="GO:0008253">
    <property type="term" value="F:5'-nucleotidase activity"/>
    <property type="evidence" value="ECO:0007669"/>
    <property type="project" value="UniProtKB-UniRule"/>
</dbReference>
<dbReference type="GO" id="GO:0046872">
    <property type="term" value="F:metal ion binding"/>
    <property type="evidence" value="ECO:0007669"/>
    <property type="project" value="UniProtKB-UniRule"/>
</dbReference>
<dbReference type="GO" id="GO:0000166">
    <property type="term" value="F:nucleotide binding"/>
    <property type="evidence" value="ECO:0007669"/>
    <property type="project" value="UniProtKB-KW"/>
</dbReference>
<dbReference type="Gene3D" id="3.40.1210.10">
    <property type="entry name" value="Survival protein SurE-like phosphatase/nucleotidase"/>
    <property type="match status" value="1"/>
</dbReference>
<dbReference type="HAMAP" id="MF_00060">
    <property type="entry name" value="SurE"/>
    <property type="match status" value="1"/>
</dbReference>
<dbReference type="InterPro" id="IPR030048">
    <property type="entry name" value="SurE"/>
</dbReference>
<dbReference type="InterPro" id="IPR002828">
    <property type="entry name" value="SurE-like_Pase/nucleotidase"/>
</dbReference>
<dbReference type="InterPro" id="IPR036523">
    <property type="entry name" value="SurE-like_sf"/>
</dbReference>
<dbReference type="NCBIfam" id="NF001491">
    <property type="entry name" value="PRK00346.2-1"/>
    <property type="match status" value="1"/>
</dbReference>
<dbReference type="NCBIfam" id="TIGR00087">
    <property type="entry name" value="surE"/>
    <property type="match status" value="1"/>
</dbReference>
<dbReference type="PANTHER" id="PTHR30457">
    <property type="entry name" value="5'-NUCLEOTIDASE SURE"/>
    <property type="match status" value="1"/>
</dbReference>
<dbReference type="PANTHER" id="PTHR30457:SF0">
    <property type="entry name" value="PHOSPHATASE, PUTATIVE (AFU_ORTHOLOGUE AFUA_4G01070)-RELATED"/>
    <property type="match status" value="1"/>
</dbReference>
<dbReference type="Pfam" id="PF01975">
    <property type="entry name" value="SurE"/>
    <property type="match status" value="1"/>
</dbReference>
<dbReference type="SUPFAM" id="SSF64167">
    <property type="entry name" value="SurE-like"/>
    <property type="match status" value="1"/>
</dbReference>
<reference key="1">
    <citation type="journal article" date="2007" name="Proc. Natl. Acad. Sci. U.S.A.">
        <title>Genomic and metabolic adaptations of Methanobrevibacter smithii to the human gut.</title>
        <authorList>
            <person name="Samuel B.S."/>
            <person name="Hansen E.E."/>
            <person name="Manchester J.K."/>
            <person name="Coutinho P.M."/>
            <person name="Henrissat B."/>
            <person name="Fulton R."/>
            <person name="Latreille P."/>
            <person name="Kim K."/>
            <person name="Wilson R.K."/>
            <person name="Gordon J.I."/>
        </authorList>
    </citation>
    <scope>NUCLEOTIDE SEQUENCE [LARGE SCALE GENOMIC DNA]</scope>
    <source>
        <strain>ATCC 35061 / DSM 861 / OCM 144 / PS</strain>
    </source>
</reference>
<name>SURE_METS3</name>
<sequence length="258" mass="28044">MKALISNDDGVNATGILAAKNAIEDLCEVCVVAPETQQSGIGHAITLYDPLRINPTTLRDKSQAYGVTGTPTDAVTFGLFEIMGEKPDIMISGINTGFNIGKAELTTSGTIGAALEAASFGIPSIAISQEVTRDYIKFENGTVDIDFSFAGKMLRKLVKIVFKKGLPDGIDLLNVNIPENPVDEEFEVAKLGNRMYTPIIQRRLDPRGKPYYWIGGDPYNSDCEGTDGHCLKKLNKATITPLTIDLTGEMDLIKEWLK</sequence>
<comment type="function">
    <text evidence="1">Nucleotidase that shows phosphatase activity on nucleoside 5'-monophosphates.</text>
</comment>
<comment type="catalytic activity">
    <reaction evidence="1">
        <text>a ribonucleoside 5'-phosphate + H2O = a ribonucleoside + phosphate</text>
        <dbReference type="Rhea" id="RHEA:12484"/>
        <dbReference type="ChEBI" id="CHEBI:15377"/>
        <dbReference type="ChEBI" id="CHEBI:18254"/>
        <dbReference type="ChEBI" id="CHEBI:43474"/>
        <dbReference type="ChEBI" id="CHEBI:58043"/>
        <dbReference type="EC" id="3.1.3.5"/>
    </reaction>
</comment>
<comment type="cofactor">
    <cofactor evidence="1">
        <name>a divalent metal cation</name>
        <dbReference type="ChEBI" id="CHEBI:60240"/>
    </cofactor>
    <text evidence="1">Binds 1 divalent metal cation per subunit.</text>
</comment>
<comment type="subcellular location">
    <subcellularLocation>
        <location evidence="1">Cytoplasm</location>
    </subcellularLocation>
</comment>
<comment type="similarity">
    <text evidence="1">Belongs to the SurE nucleotidase family.</text>
</comment>
<protein>
    <recommendedName>
        <fullName evidence="1">5'-nucleotidase SurE</fullName>
        <ecNumber evidence="1">3.1.3.5</ecNumber>
    </recommendedName>
    <alternativeName>
        <fullName evidence="1">Nucleoside 5'-monophosphate phosphohydrolase</fullName>
    </alternativeName>
</protein>
<accession>A5UMJ5</accession>
<feature type="chain" id="PRO_1000007751" description="5'-nucleotidase SurE">
    <location>
        <begin position="1"/>
        <end position="258"/>
    </location>
</feature>
<feature type="binding site" evidence="1">
    <location>
        <position position="8"/>
    </location>
    <ligand>
        <name>a divalent metal cation</name>
        <dbReference type="ChEBI" id="CHEBI:60240"/>
    </ligand>
</feature>
<feature type="binding site" evidence="1">
    <location>
        <position position="9"/>
    </location>
    <ligand>
        <name>a divalent metal cation</name>
        <dbReference type="ChEBI" id="CHEBI:60240"/>
    </ligand>
</feature>
<feature type="binding site" evidence="1">
    <location>
        <position position="39"/>
    </location>
    <ligand>
        <name>a divalent metal cation</name>
        <dbReference type="ChEBI" id="CHEBI:60240"/>
    </ligand>
</feature>
<feature type="binding site" evidence="1">
    <location>
        <position position="95"/>
    </location>
    <ligand>
        <name>a divalent metal cation</name>
        <dbReference type="ChEBI" id="CHEBI:60240"/>
    </ligand>
</feature>
<organism>
    <name type="scientific">Methanobrevibacter smithii (strain ATCC 35061 / DSM 861 / OCM 144 / PS)</name>
    <dbReference type="NCBI Taxonomy" id="420247"/>
    <lineage>
        <taxon>Archaea</taxon>
        <taxon>Methanobacteriati</taxon>
        <taxon>Methanobacteriota</taxon>
        <taxon>Methanomada group</taxon>
        <taxon>Methanobacteria</taxon>
        <taxon>Methanobacteriales</taxon>
        <taxon>Methanobacteriaceae</taxon>
        <taxon>Methanobrevibacter</taxon>
    </lineage>
</organism>
<proteinExistence type="inferred from homology"/>